<proteinExistence type="evidence at protein level"/>
<reference key="1">
    <citation type="journal article" date="2003" name="Mol. Cell. Proteomics">
        <title>ERp19 and ERp46, new members of the thioredoxin family of endoplasmic reticulum proteins.</title>
        <authorList>
            <person name="Knoblach B."/>
            <person name="Keller B.O."/>
            <person name="Groenendyk J."/>
            <person name="Aldred S."/>
            <person name="Zheng J."/>
            <person name="Lemire B.D."/>
            <person name="Li L."/>
            <person name="Michalak M."/>
        </authorList>
    </citation>
    <scope>NUCLEOTIDE SEQUENCE [MRNA]</scope>
    <scope>PROTEIN SEQUENCE OF 316-329 AND 401-411</scope>
    <scope>FUNCTION</scope>
    <scope>CATALYTIC ACTIVITY</scope>
    <scope>SUBCELLULAR LOCATION</scope>
    <scope>MASS SPECTROMETRY</scope>
    <source>
        <strain>BALB/cJ</strain>
    </source>
</reference>
<reference key="2">
    <citation type="journal article" date="2004" name="Eur. J. Immunol.">
        <title>Identification of a novel thioredoxin-related protein, PC-TRP, which is preferentially expressed in plasma cells.</title>
        <authorList>
            <person name="Wrammert J."/>
            <person name="Kallberg E."/>
            <person name="Leanderson T."/>
        </authorList>
    </citation>
    <scope>NUCLEOTIDE SEQUENCE [MRNA]</scope>
    <scope>FUNCTION</scope>
    <scope>CATALYTIC ACTIVITY</scope>
    <scope>TISSUE SPECIFICITY</scope>
    <source>
        <strain>C57BL/6J</strain>
        <tissue>B-cell</tissue>
    </source>
</reference>
<reference key="3">
    <citation type="journal article" date="2004" name="Genome Res.">
        <title>The status, quality, and expansion of the NIH full-length cDNA project: the Mammalian Gene Collection (MGC).</title>
        <authorList>
            <consortium name="The MGC Project Team"/>
        </authorList>
    </citation>
    <scope>NUCLEOTIDE SEQUENCE [LARGE SCALE MRNA]</scope>
    <source>
        <strain>C57BL/6J</strain>
        <strain>FVB/N</strain>
        <tissue>Brain</tissue>
        <tissue>Colon</tissue>
        <tissue>Salivary gland</tissue>
    </source>
</reference>
<reference key="4">
    <citation type="journal article" date="2010" name="Cell">
        <title>A tissue-specific atlas of mouse protein phosphorylation and expression.</title>
        <authorList>
            <person name="Huttlin E.L."/>
            <person name="Jedrychowski M.P."/>
            <person name="Elias J.E."/>
            <person name="Goswami T."/>
            <person name="Rad R."/>
            <person name="Beausoleil S.A."/>
            <person name="Villen J."/>
            <person name="Haas W."/>
            <person name="Sowa M.E."/>
            <person name="Gygi S.P."/>
        </authorList>
    </citation>
    <scope>IDENTIFICATION BY MASS SPECTROMETRY [LARGE SCALE ANALYSIS]</scope>
    <source>
        <tissue>Brain</tissue>
        <tissue>Heart</tissue>
        <tissue>Kidney</tissue>
        <tissue>Liver</tissue>
        <tissue>Lung</tissue>
        <tissue>Pancreas</tissue>
        <tissue>Spleen</tissue>
        <tissue>Testis</tissue>
    </source>
</reference>
<protein>
    <recommendedName>
        <fullName evidence="10">Thioredoxin domain-containing protein 5</fullName>
        <ecNumber evidence="6">1.8.4.-</ecNumber>
        <ecNumber evidence="5">5.3.4.1</ecNumber>
    </recommendedName>
    <alternativeName>
        <fullName evidence="7">Endoplasmic reticulum resident protein 46</fullName>
        <shortName evidence="7">ER protein 46</shortName>
        <shortName evidence="7">ERp46</shortName>
    </alternativeName>
    <alternativeName>
        <fullName evidence="8">Plasma cell-specific thioredoxin-related protein</fullName>
        <shortName evidence="8">PC-TRP</shortName>
    </alternativeName>
    <alternativeName>
        <fullName>Thioredoxin-like protein p46</fullName>
    </alternativeName>
</protein>
<comment type="function">
    <text evidence="5 6">Protein disulfide isomerase of the endoplasmic reticulum lumen involved in the formation of disulfide bonds in proteins (PubMed:12930873, PubMed:14971039). Can reduce insulin disulfide bonds (PubMed:14971039).</text>
</comment>
<comment type="catalytic activity">
    <reaction evidence="5">
        <text>Catalyzes the rearrangement of -S-S- bonds in proteins.</text>
        <dbReference type="EC" id="5.3.4.1"/>
    </reaction>
</comment>
<comment type="subcellular location">
    <subcellularLocation>
        <location evidence="3 5">Endoplasmic reticulum lumen</location>
    </subcellularLocation>
</comment>
<comment type="tissue specificity">
    <text evidence="6">Expressed at high levels in plasma cells and at very low levels in all other cells and tissues examined (at protein level).</text>
</comment>
<comment type="mass spectrometry" mass="51200.0" method="MALDI" evidence="5"/>
<comment type="similarity">
    <text evidence="9">Belongs to the protein disulfide isomerase family.</text>
</comment>
<name>TXND5_MOUSE</name>
<accession>Q91W90</accession>
<accession>Q8R1I6</accession>
<sequence length="417" mass="46415">MPPRPGRLLQPLAGLPALATLLLLLGARKGARAQEVEADSGVEQDPHAKHLYTADMFTHGIQSAAHFVMFFAPWCGHCQRLQPTWNDLGDKYNSMEDAKVYVAKVDCTADSDVCSAQGVRGYPTLKFFKPGQEAVKYQGPRDFETLENWMLQTLNEEPATPEPEAEPPRAPELKQGLYELSANNFELHVSQGNHFIKFFAPWCGHCKALAPTWEQLALGLEHSETVKIGKVDCTQHYAVCSEHQVRGYPTLLWFRDGKKVDQYKGKRDLESLRDYVQSQLQGSEAAPETVEPSEAPVMAAEPTGDKGTVLALTEKSFEDTIAQGITFVKFYAPWCGHCKNLAPTWEELSKKEFPGLSDVTIAEVDCTAERNVCSKYSVRGYPTLLLFRGGEKVGEHNGGRDLDSLHSFVLRQAKDEL</sequence>
<keyword id="KW-0903">Direct protein sequencing</keyword>
<keyword id="KW-1015">Disulfide bond</keyword>
<keyword id="KW-0256">Endoplasmic reticulum</keyword>
<keyword id="KW-0413">Isomerase</keyword>
<keyword id="KW-0560">Oxidoreductase</keyword>
<keyword id="KW-0676">Redox-active center</keyword>
<keyword id="KW-1185">Reference proteome</keyword>
<keyword id="KW-0677">Repeat</keyword>
<keyword id="KW-0732">Signal</keyword>
<gene>
    <name evidence="11" type="primary">Txndc5</name>
    <name type="synonym">Tlp46</name>
</gene>
<feature type="signal peptide" evidence="1">
    <location>
        <begin position="1"/>
        <end position="33"/>
    </location>
</feature>
<feature type="chain" id="PRO_0000034184" description="Thioredoxin domain-containing protein 5">
    <location>
        <begin position="34"/>
        <end position="417"/>
    </location>
</feature>
<feature type="domain" description="Thioredoxin 1" evidence="2">
    <location>
        <begin position="35"/>
        <end position="155"/>
    </location>
</feature>
<feature type="domain" description="Thioredoxin 2" evidence="2">
    <location>
        <begin position="156"/>
        <end position="281"/>
    </location>
</feature>
<feature type="domain" description="Thioredoxin 3" evidence="2">
    <location>
        <begin position="289"/>
        <end position="417"/>
    </location>
</feature>
<feature type="region of interest" description="Disordered" evidence="4">
    <location>
        <begin position="281"/>
        <end position="302"/>
    </location>
</feature>
<feature type="short sequence motif" description="Prevents secretion from ER" evidence="3">
    <location>
        <begin position="414"/>
        <end position="417"/>
    </location>
</feature>
<feature type="disulfide bond" description="Redox-active" evidence="2">
    <location>
        <begin position="75"/>
        <end position="78"/>
    </location>
</feature>
<feature type="disulfide bond" description="Redox-active" evidence="2">
    <location>
        <begin position="203"/>
        <end position="206"/>
    </location>
</feature>
<feature type="disulfide bond" description="Redox-active" evidence="2">
    <location>
        <begin position="335"/>
        <end position="338"/>
    </location>
</feature>
<feature type="sequence conflict" description="In Ref. 2; AAP68841 and 3; AAH16252." evidence="9" ref="2 3">
    <original>P</original>
    <variation>L</variation>
    <location>
        <position position="171"/>
    </location>
</feature>
<feature type="sequence conflict" description="In Ref. 2; AAP68841 and 3; AAH16252." evidence="9" ref="2 3">
    <original>L</original>
    <variation>Q</variation>
    <location>
        <position position="280"/>
    </location>
</feature>
<evidence type="ECO:0000255" key="1"/>
<evidence type="ECO:0000255" key="2">
    <source>
        <dbReference type="PROSITE-ProRule" id="PRU00691"/>
    </source>
</evidence>
<evidence type="ECO:0000255" key="3">
    <source>
        <dbReference type="PROSITE-ProRule" id="PRU10138"/>
    </source>
</evidence>
<evidence type="ECO:0000256" key="4">
    <source>
        <dbReference type="SAM" id="MobiDB-lite"/>
    </source>
</evidence>
<evidence type="ECO:0000269" key="5">
    <source>
    </source>
</evidence>
<evidence type="ECO:0000269" key="6">
    <source>
    </source>
</evidence>
<evidence type="ECO:0000303" key="7">
    <source>
    </source>
</evidence>
<evidence type="ECO:0000303" key="8">
    <source>
    </source>
</evidence>
<evidence type="ECO:0000305" key="9"/>
<evidence type="ECO:0000305" key="10">
    <source>
    </source>
</evidence>
<evidence type="ECO:0000312" key="11">
    <source>
        <dbReference type="MGI" id="MGI:2145316"/>
    </source>
</evidence>
<organism>
    <name type="scientific">Mus musculus</name>
    <name type="common">Mouse</name>
    <dbReference type="NCBI Taxonomy" id="10090"/>
    <lineage>
        <taxon>Eukaryota</taxon>
        <taxon>Metazoa</taxon>
        <taxon>Chordata</taxon>
        <taxon>Craniata</taxon>
        <taxon>Vertebrata</taxon>
        <taxon>Euteleostomi</taxon>
        <taxon>Mammalia</taxon>
        <taxon>Eutheria</taxon>
        <taxon>Euarchontoglires</taxon>
        <taxon>Glires</taxon>
        <taxon>Rodentia</taxon>
        <taxon>Myomorpha</taxon>
        <taxon>Muroidea</taxon>
        <taxon>Muridae</taxon>
        <taxon>Murinae</taxon>
        <taxon>Mus</taxon>
        <taxon>Mus</taxon>
    </lineage>
</organism>
<dbReference type="EC" id="1.8.4.-" evidence="6"/>
<dbReference type="EC" id="5.3.4.1" evidence="5"/>
<dbReference type="EMBL" id="AY548112">
    <property type="protein sequence ID" value="AAS55652.1"/>
    <property type="molecule type" value="mRNA"/>
</dbReference>
<dbReference type="EMBL" id="AY243534">
    <property type="protein sequence ID" value="AAP68841.1"/>
    <property type="molecule type" value="mRNA"/>
</dbReference>
<dbReference type="EMBL" id="BC016252">
    <property type="protein sequence ID" value="AAH16252.2"/>
    <property type="molecule type" value="mRNA"/>
</dbReference>
<dbReference type="EMBL" id="BC024505">
    <property type="protein sequence ID" value="AAH24505.1"/>
    <property type="molecule type" value="mRNA"/>
</dbReference>
<dbReference type="EMBL" id="BC046789">
    <property type="protein sequence ID" value="AAH46789.3"/>
    <property type="molecule type" value="mRNA"/>
</dbReference>
<dbReference type="CCDS" id="CCDS26463.1"/>
<dbReference type="RefSeq" id="NP_001276527.1">
    <property type="nucleotide sequence ID" value="NM_001289598.1"/>
</dbReference>
<dbReference type="RefSeq" id="NP_001276528.1">
    <property type="nucleotide sequence ID" value="NM_001289599.1"/>
</dbReference>
<dbReference type="RefSeq" id="NP_663342.3">
    <property type="nucleotide sequence ID" value="NM_145367.4"/>
</dbReference>
<dbReference type="SMR" id="Q91W90"/>
<dbReference type="BioGRID" id="222795">
    <property type="interactions" value="20"/>
</dbReference>
<dbReference type="FunCoup" id="Q91W90">
    <property type="interactions" value="1677"/>
</dbReference>
<dbReference type="STRING" id="10090.ENSMUSP00000041839"/>
<dbReference type="iPTMnet" id="Q91W90"/>
<dbReference type="PhosphoSitePlus" id="Q91W90"/>
<dbReference type="SwissPalm" id="Q91W90"/>
<dbReference type="REPRODUCTION-2DPAGE" id="Q91W90"/>
<dbReference type="jPOST" id="Q91W90"/>
<dbReference type="PaxDb" id="10090-ENSMUSP00000041839"/>
<dbReference type="PeptideAtlas" id="Q91W90"/>
<dbReference type="ProteomicsDB" id="298074"/>
<dbReference type="Pumba" id="Q91W90"/>
<dbReference type="Antibodypedia" id="34993">
    <property type="antibodies" value="556 antibodies from 34 providers"/>
</dbReference>
<dbReference type="DNASU" id="105245"/>
<dbReference type="Ensembl" id="ENSMUST00000035988.16">
    <property type="protein sequence ID" value="ENSMUSP00000041839.9"/>
    <property type="gene ID" value="ENSMUSG00000038991.18"/>
</dbReference>
<dbReference type="GeneID" id="105245"/>
<dbReference type="KEGG" id="mmu:105245"/>
<dbReference type="UCSC" id="uc007qdq.2">
    <property type="organism name" value="mouse"/>
</dbReference>
<dbReference type="AGR" id="MGI:2145316"/>
<dbReference type="CTD" id="81567"/>
<dbReference type="MGI" id="MGI:2145316">
    <property type="gene designation" value="Txndc5"/>
</dbReference>
<dbReference type="VEuPathDB" id="HostDB:ENSMUSG00000038991"/>
<dbReference type="eggNOG" id="KOG0191">
    <property type="taxonomic scope" value="Eukaryota"/>
</dbReference>
<dbReference type="GeneTree" id="ENSGT00940000156920"/>
<dbReference type="InParanoid" id="Q91W90"/>
<dbReference type="OMA" id="TKHQTLC"/>
<dbReference type="OrthoDB" id="71336at2759"/>
<dbReference type="PhylomeDB" id="Q91W90"/>
<dbReference type="TreeFam" id="TF106379"/>
<dbReference type="Reactome" id="R-MMU-432720">
    <property type="pathway name" value="Lysosome Vesicle Biogenesis"/>
</dbReference>
<dbReference type="Reactome" id="R-MMU-432722">
    <property type="pathway name" value="Golgi Associated Vesicle Biogenesis"/>
</dbReference>
<dbReference type="Reactome" id="R-MMU-6798695">
    <property type="pathway name" value="Neutrophil degranulation"/>
</dbReference>
<dbReference type="BioGRID-ORCS" id="105245">
    <property type="hits" value="2 hits in 77 CRISPR screens"/>
</dbReference>
<dbReference type="ChiTaRS" id="Txndc5">
    <property type="organism name" value="mouse"/>
</dbReference>
<dbReference type="PRO" id="PR:Q91W90"/>
<dbReference type="Proteomes" id="UP000000589">
    <property type="component" value="Chromosome 13"/>
</dbReference>
<dbReference type="RNAct" id="Q91W90">
    <property type="molecule type" value="protein"/>
</dbReference>
<dbReference type="Bgee" id="ENSMUSG00000038991">
    <property type="expression patterns" value="Expressed in lacrimal gland and 257 other cell types or tissues"/>
</dbReference>
<dbReference type="ExpressionAtlas" id="Q91W90">
    <property type="expression patterns" value="baseline and differential"/>
</dbReference>
<dbReference type="GO" id="GO:0005788">
    <property type="term" value="C:endoplasmic reticulum lumen"/>
    <property type="evidence" value="ECO:0000314"/>
    <property type="project" value="UniProtKB"/>
</dbReference>
<dbReference type="GO" id="GO:0003756">
    <property type="term" value="F:protein disulfide isomerase activity"/>
    <property type="evidence" value="ECO:0000316"/>
    <property type="project" value="UniProtKB"/>
</dbReference>
<dbReference type="GO" id="GO:0015035">
    <property type="term" value="F:protein-disulfide reductase activity"/>
    <property type="evidence" value="ECO:0000314"/>
    <property type="project" value="UniProtKB"/>
</dbReference>
<dbReference type="CDD" id="cd03005">
    <property type="entry name" value="PDI_a_ERp46"/>
    <property type="match status" value="3"/>
</dbReference>
<dbReference type="FunFam" id="3.40.30.10:FF:000146">
    <property type="entry name" value="Thioredoxin domain containing 5"/>
    <property type="match status" value="1"/>
</dbReference>
<dbReference type="FunFam" id="3.40.30.10:FF:000164">
    <property type="entry name" value="Thioredoxin domain containing 5"/>
    <property type="match status" value="1"/>
</dbReference>
<dbReference type="FunFam" id="3.40.30.10:FF:000147">
    <property type="entry name" value="Thioredoxin domain-containing protein 5"/>
    <property type="match status" value="1"/>
</dbReference>
<dbReference type="Gene3D" id="3.40.30.10">
    <property type="entry name" value="Glutaredoxin"/>
    <property type="match status" value="3"/>
</dbReference>
<dbReference type="InterPro" id="IPR051063">
    <property type="entry name" value="PDI"/>
</dbReference>
<dbReference type="InterPro" id="IPR005788">
    <property type="entry name" value="PDI_thioredoxin-like_dom"/>
</dbReference>
<dbReference type="InterPro" id="IPR036249">
    <property type="entry name" value="Thioredoxin-like_sf"/>
</dbReference>
<dbReference type="InterPro" id="IPR017937">
    <property type="entry name" value="Thioredoxin_CS"/>
</dbReference>
<dbReference type="InterPro" id="IPR013766">
    <property type="entry name" value="Thioredoxin_domain"/>
</dbReference>
<dbReference type="NCBIfam" id="TIGR01126">
    <property type="entry name" value="pdi_dom"/>
    <property type="match status" value="1"/>
</dbReference>
<dbReference type="PANTHER" id="PTHR45672">
    <property type="entry name" value="PROTEIN DISULFIDE-ISOMERASE C17H9.14C-RELATED"/>
    <property type="match status" value="1"/>
</dbReference>
<dbReference type="PANTHER" id="PTHR45672:SF3">
    <property type="entry name" value="THIOREDOXIN DOMAIN-CONTAINING PROTEIN 5"/>
    <property type="match status" value="1"/>
</dbReference>
<dbReference type="Pfam" id="PF00085">
    <property type="entry name" value="Thioredoxin"/>
    <property type="match status" value="3"/>
</dbReference>
<dbReference type="PRINTS" id="PR00421">
    <property type="entry name" value="THIOREDOXIN"/>
</dbReference>
<dbReference type="SUPFAM" id="SSF52833">
    <property type="entry name" value="Thioredoxin-like"/>
    <property type="match status" value="3"/>
</dbReference>
<dbReference type="PROSITE" id="PS00014">
    <property type="entry name" value="ER_TARGET"/>
    <property type="match status" value="1"/>
</dbReference>
<dbReference type="PROSITE" id="PS00194">
    <property type="entry name" value="THIOREDOXIN_1"/>
    <property type="match status" value="3"/>
</dbReference>
<dbReference type="PROSITE" id="PS51352">
    <property type="entry name" value="THIOREDOXIN_2"/>
    <property type="match status" value="3"/>
</dbReference>